<name>DLDH_RHIEC</name>
<comment type="function">
    <text evidence="1">Lipoamide dehydrogenase is a component of the alpha-ketoacid dehydrogenase complexes.</text>
</comment>
<comment type="catalytic activity">
    <reaction>
        <text>N(6)-[(R)-dihydrolipoyl]-L-lysyl-[protein] + NAD(+) = N(6)-[(R)-lipoyl]-L-lysyl-[protein] + NADH + H(+)</text>
        <dbReference type="Rhea" id="RHEA:15045"/>
        <dbReference type="Rhea" id="RHEA-COMP:10474"/>
        <dbReference type="Rhea" id="RHEA-COMP:10475"/>
        <dbReference type="ChEBI" id="CHEBI:15378"/>
        <dbReference type="ChEBI" id="CHEBI:57540"/>
        <dbReference type="ChEBI" id="CHEBI:57945"/>
        <dbReference type="ChEBI" id="CHEBI:83099"/>
        <dbReference type="ChEBI" id="CHEBI:83100"/>
        <dbReference type="EC" id="1.8.1.4"/>
    </reaction>
</comment>
<comment type="cofactor">
    <cofactor evidence="1">
        <name>FAD</name>
        <dbReference type="ChEBI" id="CHEBI:57692"/>
    </cofactor>
    <text evidence="1">Binds 1 FAD per subunit.</text>
</comment>
<comment type="subunit">
    <text evidence="1">Homodimer.</text>
</comment>
<comment type="subcellular location">
    <subcellularLocation>
        <location evidence="2">Cytoplasm</location>
    </subcellularLocation>
</comment>
<comment type="miscellaneous">
    <text>The active site is a redox-active disulfide bond.</text>
</comment>
<comment type="similarity">
    <text evidence="2">Belongs to the class-I pyridine nucleotide-disulfide oxidoreductase family.</text>
</comment>
<feature type="chain" id="PRO_0000068041" description="Dihydrolipoyl dehydrogenase">
    <location>
        <begin position="1"/>
        <end position="481"/>
    </location>
</feature>
<feature type="active site" description="Proton acceptor" evidence="1">
    <location>
        <position position="460"/>
    </location>
</feature>
<feature type="binding site" evidence="1">
    <location>
        <begin position="34"/>
        <end position="42"/>
    </location>
    <ligand>
        <name>FAD</name>
        <dbReference type="ChEBI" id="CHEBI:57692"/>
    </ligand>
</feature>
<feature type="binding site" evidence="1">
    <location>
        <position position="51"/>
    </location>
    <ligand>
        <name>FAD</name>
        <dbReference type="ChEBI" id="CHEBI:57692"/>
    </ligand>
</feature>
<feature type="binding site" evidence="1">
    <location>
        <begin position="195"/>
        <end position="199"/>
    </location>
    <ligand>
        <name>NAD(+)</name>
        <dbReference type="ChEBI" id="CHEBI:57540"/>
    </ligand>
</feature>
<feature type="binding site" evidence="1">
    <location>
        <position position="218"/>
    </location>
    <ligand>
        <name>NAD(+)</name>
        <dbReference type="ChEBI" id="CHEBI:57540"/>
    </ligand>
</feature>
<feature type="binding site" evidence="1">
    <location>
        <begin position="284"/>
        <end position="287"/>
    </location>
    <ligand>
        <name>NAD(+)</name>
        <dbReference type="ChEBI" id="CHEBI:57540"/>
    </ligand>
</feature>
<feature type="binding site" evidence="1">
    <location>
        <position position="326"/>
    </location>
    <ligand>
        <name>FAD</name>
        <dbReference type="ChEBI" id="CHEBI:57692"/>
    </ligand>
</feature>
<feature type="binding site" evidence="1">
    <location>
        <position position="334"/>
    </location>
    <ligand>
        <name>FAD</name>
        <dbReference type="ChEBI" id="CHEBI:57692"/>
    </ligand>
</feature>
<feature type="disulfide bond" description="Redox-active" evidence="1">
    <location>
        <begin position="42"/>
        <end position="47"/>
    </location>
</feature>
<feature type="sequence conflict" description="In Ref. 2; CAA72399." evidence="2" ref="2">
    <original>K</original>
    <variation>L</variation>
    <location>
        <position position="302"/>
    </location>
</feature>
<feature type="sequence conflict" description="In Ref. 2; CAA72399." evidence="2" ref="2">
    <original>GCV</original>
    <variation>RWL</variation>
    <location>
        <begin position="306"/>
        <end position="308"/>
    </location>
</feature>
<feature type="sequence conflict" description="In Ref. 2; CAA72399." evidence="2" ref="2">
    <original>ML</original>
    <variation>IV</variation>
    <location>
        <begin position="332"/>
        <end position="333"/>
    </location>
</feature>
<feature type="sequence conflict" description="In Ref. 2; CAA72399." evidence="2" ref="2">
    <original>L</original>
    <variation>V</variation>
    <location>
        <position position="351"/>
    </location>
</feature>
<feature type="sequence conflict" description="In Ref. 2; CAA72399." evidence="2" ref="2">
    <original>R</original>
    <variation>S</variation>
    <location>
        <position position="387"/>
    </location>
</feature>
<feature type="sequence conflict" description="In Ref. 2; CAA72399." evidence="2" ref="2">
    <original>G</original>
    <variation>R</variation>
    <location>
        <position position="400"/>
    </location>
</feature>
<feature type="sequence conflict" description="In Ref. 2; CAA72399." evidence="2" ref="2">
    <location>
        <begin position="479"/>
        <end position="481"/>
    </location>
</feature>
<reference key="1">
    <citation type="journal article" date="2006" name="Proc. Natl. Acad. Sci. U.S.A.">
        <title>The partitioned Rhizobium etli genome: genetic and metabolic redundancy in seven interacting replicons.</title>
        <authorList>
            <person name="Gonzalez V."/>
            <person name="Santamaria R.I."/>
            <person name="Bustos P."/>
            <person name="Hernandez-Gonzalez I."/>
            <person name="Medrano-Soto A."/>
            <person name="Moreno-Hagelsieb G."/>
            <person name="Janga S.C."/>
            <person name="Ramirez M.A."/>
            <person name="Jimenez-Jacinto V."/>
            <person name="Collado-Vides J."/>
            <person name="Davila G."/>
        </authorList>
    </citation>
    <scope>NUCLEOTIDE SEQUENCE [LARGE SCALE GENOMIC DNA]</scope>
    <source>
        <strain>ATCC 51251 / DSM 11541 / JCM 21823 / NBRC 15573 / CFN 42</strain>
    </source>
</reference>
<reference key="2">
    <citation type="journal article" date="1997" name="FEMS Microbiol. Lett.">
        <title>Cloning and transcriptional analysis of the lipA (lipoic acid synthetase) gene from Rhizobium etli.</title>
        <authorList>
            <person name="Tate R."/>
            <person name="Riccio A."/>
            <person name="Iaccarino M."/>
            <person name="Patriarca E.J."/>
        </authorList>
    </citation>
    <scope>NUCLEOTIDE SEQUENCE [GENOMIC DNA] OF 202-481</scope>
    <source>
        <strain>CE3</strain>
    </source>
</reference>
<proteinExistence type="inferred from homology"/>
<accession>O05940</accession>
<accession>Q2K8W2</accession>
<evidence type="ECO:0000250" key="1"/>
<evidence type="ECO:0000305" key="2"/>
<dbReference type="EC" id="1.8.1.4"/>
<dbReference type="EMBL" id="CP000133">
    <property type="protein sequence ID" value="ABC90724.1"/>
    <property type="molecule type" value="Genomic_DNA"/>
</dbReference>
<dbReference type="EMBL" id="Y11708">
    <property type="protein sequence ID" value="CAA72399.1"/>
    <property type="molecule type" value="Genomic_DNA"/>
</dbReference>
<dbReference type="RefSeq" id="WP_011425214.1">
    <property type="nucleotide sequence ID" value="NC_007761.1"/>
</dbReference>
<dbReference type="SMR" id="O05940"/>
<dbReference type="KEGG" id="ret:RHE_CH01938"/>
<dbReference type="eggNOG" id="COG1249">
    <property type="taxonomic scope" value="Bacteria"/>
</dbReference>
<dbReference type="HOGENOM" id="CLU_016755_0_2_5"/>
<dbReference type="OrthoDB" id="9776382at2"/>
<dbReference type="Proteomes" id="UP000001936">
    <property type="component" value="Chromosome"/>
</dbReference>
<dbReference type="GO" id="GO:0005737">
    <property type="term" value="C:cytoplasm"/>
    <property type="evidence" value="ECO:0007669"/>
    <property type="project" value="UniProtKB-SubCell"/>
</dbReference>
<dbReference type="GO" id="GO:0004148">
    <property type="term" value="F:dihydrolipoyl dehydrogenase (NADH) activity"/>
    <property type="evidence" value="ECO:0007669"/>
    <property type="project" value="UniProtKB-EC"/>
</dbReference>
<dbReference type="GO" id="GO:0050660">
    <property type="term" value="F:flavin adenine dinucleotide binding"/>
    <property type="evidence" value="ECO:0007669"/>
    <property type="project" value="InterPro"/>
</dbReference>
<dbReference type="GO" id="GO:0006103">
    <property type="term" value="P:2-oxoglutarate metabolic process"/>
    <property type="evidence" value="ECO:0007669"/>
    <property type="project" value="TreeGrafter"/>
</dbReference>
<dbReference type="FunFam" id="3.30.390.30:FF:000001">
    <property type="entry name" value="Dihydrolipoyl dehydrogenase"/>
    <property type="match status" value="1"/>
</dbReference>
<dbReference type="Gene3D" id="3.30.390.30">
    <property type="match status" value="1"/>
</dbReference>
<dbReference type="Gene3D" id="3.50.50.60">
    <property type="entry name" value="FAD/NAD(P)-binding domain"/>
    <property type="match status" value="2"/>
</dbReference>
<dbReference type="InterPro" id="IPR050151">
    <property type="entry name" value="Class-I_Pyr_Nuc-Dis_Oxidored"/>
</dbReference>
<dbReference type="InterPro" id="IPR036188">
    <property type="entry name" value="FAD/NAD-bd_sf"/>
</dbReference>
<dbReference type="InterPro" id="IPR023753">
    <property type="entry name" value="FAD/NAD-binding_dom"/>
</dbReference>
<dbReference type="InterPro" id="IPR016156">
    <property type="entry name" value="FAD/NAD-linked_Rdtase_dimer_sf"/>
</dbReference>
<dbReference type="InterPro" id="IPR006258">
    <property type="entry name" value="Lipoamide_DH"/>
</dbReference>
<dbReference type="InterPro" id="IPR001100">
    <property type="entry name" value="Pyr_nuc-diS_OxRdtase"/>
</dbReference>
<dbReference type="InterPro" id="IPR004099">
    <property type="entry name" value="Pyr_nucl-diS_OxRdtase_dimer"/>
</dbReference>
<dbReference type="InterPro" id="IPR012999">
    <property type="entry name" value="Pyr_OxRdtase_I_AS"/>
</dbReference>
<dbReference type="NCBIfam" id="TIGR01350">
    <property type="entry name" value="lipoamide_DH"/>
    <property type="match status" value="1"/>
</dbReference>
<dbReference type="PANTHER" id="PTHR22912:SF217">
    <property type="entry name" value="DIHYDROLIPOYL DEHYDROGENASE"/>
    <property type="match status" value="1"/>
</dbReference>
<dbReference type="PANTHER" id="PTHR22912">
    <property type="entry name" value="DISULFIDE OXIDOREDUCTASE"/>
    <property type="match status" value="1"/>
</dbReference>
<dbReference type="Pfam" id="PF07992">
    <property type="entry name" value="Pyr_redox_2"/>
    <property type="match status" value="1"/>
</dbReference>
<dbReference type="Pfam" id="PF02852">
    <property type="entry name" value="Pyr_redox_dim"/>
    <property type="match status" value="1"/>
</dbReference>
<dbReference type="PIRSF" id="PIRSF000350">
    <property type="entry name" value="Mercury_reductase_MerA"/>
    <property type="match status" value="1"/>
</dbReference>
<dbReference type="PRINTS" id="PR00368">
    <property type="entry name" value="FADPNR"/>
</dbReference>
<dbReference type="PRINTS" id="PR00411">
    <property type="entry name" value="PNDRDTASEI"/>
</dbReference>
<dbReference type="SUPFAM" id="SSF51905">
    <property type="entry name" value="FAD/NAD(P)-binding domain"/>
    <property type="match status" value="1"/>
</dbReference>
<dbReference type="SUPFAM" id="SSF55424">
    <property type="entry name" value="FAD/NAD-linked reductases, dimerisation (C-terminal) domain"/>
    <property type="match status" value="1"/>
</dbReference>
<dbReference type="PROSITE" id="PS00076">
    <property type="entry name" value="PYRIDINE_REDOX_1"/>
    <property type="match status" value="1"/>
</dbReference>
<keyword id="KW-0963">Cytoplasm</keyword>
<keyword id="KW-1015">Disulfide bond</keyword>
<keyword id="KW-0274">FAD</keyword>
<keyword id="KW-0285">Flavoprotein</keyword>
<keyword id="KW-0520">NAD</keyword>
<keyword id="KW-0560">Oxidoreductase</keyword>
<keyword id="KW-0676">Redox-active center</keyword>
<keyword id="KW-1185">Reference proteome</keyword>
<organism>
    <name type="scientific">Rhizobium etli (strain ATCC 51251 / DSM 11541 / JCM 21823 / NBRC 15573 / CFN 42)</name>
    <dbReference type="NCBI Taxonomy" id="347834"/>
    <lineage>
        <taxon>Bacteria</taxon>
        <taxon>Pseudomonadati</taxon>
        <taxon>Pseudomonadota</taxon>
        <taxon>Alphaproteobacteria</taxon>
        <taxon>Hyphomicrobiales</taxon>
        <taxon>Rhizobiaceae</taxon>
        <taxon>Rhizobium/Agrobacterium group</taxon>
        <taxon>Rhizobium</taxon>
    </lineage>
</organism>
<protein>
    <recommendedName>
        <fullName>Dihydrolipoyl dehydrogenase</fullName>
        <ecNumber>1.8.1.4</ecNumber>
    </recommendedName>
    <alternativeName>
        <fullName>Dihydrolipoamide dehydrogenase</fullName>
    </alternativeName>
    <alternativeName>
        <fullName>E3 component of pyruvate and 2-oxoglutarate dehydrogenases complexes</fullName>
    </alternativeName>
    <alternativeName>
        <fullName>ORF-E3</fullName>
    </alternativeName>
</protein>
<sequence>MAESYDVIIIGSGPGGYVAAIRASQLGLKTAIVEREHMGGICLNWGCIPTKALLRSAEVLDHANHFKDFGLVLEGSVKPDAKAVVGRSRAVSARLNAGVGFLMKKNKIDIIWGEAKLTKPGEIVVGKSSKPVVEPQHPLPKNVKGEGTYTAKHIIIATGARPRALPGIEPDGKLIWTYFEALKPDALPKSLIVMGSGAIGIEFASFYRSMGVDVTVVEVMPTIMPVEDAEITAIARKQLEKRGLKIFTSAKVTKVEKGAGSITAHVETSDGKVQQITADRMISAVGVQGNIENLGLEALGVKTDRGCVVADGYGKTNVAGIYAIGDVAGPPMLAHKAEHEGVVCVEKIAGLPNVHPTDKGKVPGCTYCNPQVASVGLTEAKAKELGRDIRVGRFSFAANGKAIALGEDQGMVKVIFDKKTGELLGAHMVGAEVTELIQGFVVAMNLETTEEELMHTIFPHPTVSETMKEAVLDAYGRVLNA</sequence>
<gene>
    <name type="primary">lpdA</name>
    <name type="ordered locus">RHE_CH01938</name>
</gene>